<protein>
    <recommendedName>
        <fullName>Threonylcarbamoyladenosine tRNA methylthiotransferase</fullName>
        <ecNumber evidence="1">2.8.4.5</ecNumber>
    </recommendedName>
    <alternativeName>
        <fullName>CDKAL1-like protein</fullName>
    </alternativeName>
    <alternativeName>
        <fullName>tRNA-t(6)A37 methylthiotransferase</fullName>
    </alternativeName>
</protein>
<gene>
    <name type="ORF">CG6550</name>
</gene>
<comment type="function">
    <text evidence="1">Catalyzes the methylthiolation of N6-threonylcarbamoyladenosine (t(6)A), leading to the formation of 2-methylthio-N6-threonylcarbamoyladenosine (ms(2)t(6)A) at position 37 in tRNAs that read codons beginning with adenine.</text>
</comment>
<comment type="catalytic activity">
    <reaction evidence="1">
        <text>N(6)-L-threonylcarbamoyladenosine(37) in tRNA + (sulfur carrier)-SH + AH2 + 2 S-adenosyl-L-methionine = 2-methylsulfanyl-N(6)-L-threonylcarbamoyladenosine(37) in tRNA + (sulfur carrier)-H + 5'-deoxyadenosine + L-methionine + A + S-adenosyl-L-homocysteine + 2 H(+)</text>
        <dbReference type="Rhea" id="RHEA:37075"/>
        <dbReference type="Rhea" id="RHEA-COMP:10163"/>
        <dbReference type="Rhea" id="RHEA-COMP:11092"/>
        <dbReference type="Rhea" id="RHEA-COMP:14737"/>
        <dbReference type="Rhea" id="RHEA-COMP:14739"/>
        <dbReference type="ChEBI" id="CHEBI:13193"/>
        <dbReference type="ChEBI" id="CHEBI:15378"/>
        <dbReference type="ChEBI" id="CHEBI:17319"/>
        <dbReference type="ChEBI" id="CHEBI:17499"/>
        <dbReference type="ChEBI" id="CHEBI:29917"/>
        <dbReference type="ChEBI" id="CHEBI:57844"/>
        <dbReference type="ChEBI" id="CHEBI:57856"/>
        <dbReference type="ChEBI" id="CHEBI:59789"/>
        <dbReference type="ChEBI" id="CHEBI:64428"/>
        <dbReference type="ChEBI" id="CHEBI:74418"/>
        <dbReference type="ChEBI" id="CHEBI:74420"/>
        <dbReference type="EC" id="2.8.4.5"/>
    </reaction>
</comment>
<comment type="cofactor">
    <cofactor evidence="4">
        <name>[4Fe-4S] cluster</name>
        <dbReference type="ChEBI" id="CHEBI:49883"/>
    </cofactor>
    <text evidence="4">Binds 2 [4Fe-4S] clusters. One cluster is coordinated with 3 cysteines and an exchangeable S-adenosyl-L-methionine.</text>
</comment>
<comment type="subcellular location">
    <subcellularLocation>
        <location evidence="7">Membrane</location>
        <topology evidence="7">Single-pass membrane protein</topology>
    </subcellularLocation>
</comment>
<comment type="similarity">
    <text evidence="7">Belongs to the methylthiotransferase family. CDKAL1 subfamily.</text>
</comment>
<feature type="chain" id="PRO_0000298676" description="Threonylcarbamoyladenosine tRNA methylthiotransferase">
    <location>
        <begin position="1"/>
        <end position="552"/>
    </location>
</feature>
<feature type="transmembrane region" description="Helical" evidence="2">
    <location>
        <begin position="532"/>
        <end position="552"/>
    </location>
</feature>
<feature type="domain" description="MTTase N-terminal" evidence="4">
    <location>
        <begin position="71"/>
        <end position="178"/>
    </location>
</feature>
<feature type="domain" description="Radical SAM core" evidence="5">
    <location>
        <begin position="207"/>
        <end position="438"/>
    </location>
</feature>
<feature type="domain" description="TRAM" evidence="3">
    <location>
        <begin position="438"/>
        <end position="500"/>
    </location>
</feature>
<feature type="region of interest" description="Disordered" evidence="6">
    <location>
        <begin position="31"/>
        <end position="61"/>
    </location>
</feature>
<feature type="binding site" evidence="4">
    <location>
        <position position="80"/>
    </location>
    <ligand>
        <name>[4Fe-4S] cluster</name>
        <dbReference type="ChEBI" id="CHEBI:49883"/>
        <label>1</label>
    </ligand>
</feature>
<feature type="binding site" evidence="4">
    <location>
        <position position="115"/>
    </location>
    <ligand>
        <name>[4Fe-4S] cluster</name>
        <dbReference type="ChEBI" id="CHEBI:49883"/>
        <label>1</label>
    </ligand>
</feature>
<feature type="binding site" evidence="4">
    <location>
        <position position="144"/>
    </location>
    <ligand>
        <name>[4Fe-4S] cluster</name>
        <dbReference type="ChEBI" id="CHEBI:49883"/>
        <label>1</label>
    </ligand>
</feature>
<feature type="binding site" evidence="4">
    <location>
        <position position="221"/>
    </location>
    <ligand>
        <name>[4Fe-4S] cluster</name>
        <dbReference type="ChEBI" id="CHEBI:49883"/>
        <label>2</label>
        <note>4Fe-4S-S-AdoMet</note>
    </ligand>
</feature>
<feature type="binding site" evidence="4">
    <location>
        <position position="225"/>
    </location>
    <ligand>
        <name>[4Fe-4S] cluster</name>
        <dbReference type="ChEBI" id="CHEBI:49883"/>
        <label>2</label>
        <note>4Fe-4S-S-AdoMet</note>
    </ligand>
</feature>
<feature type="binding site" evidence="4">
    <location>
        <position position="228"/>
    </location>
    <ligand>
        <name>[4Fe-4S] cluster</name>
        <dbReference type="ChEBI" id="CHEBI:49883"/>
        <label>2</label>
        <note>4Fe-4S-S-AdoMet</note>
    </ligand>
</feature>
<sequence>MYHLGQDLPGNDVDDIEDLISADDVKPRERYENKKTVTVRAKKRSQIRLESQEEEEKPKPTIHESVIPGTQKVFVKTWGCAHNNSDSEYMAGQLAAYGYRLSGKEEADLWLLNSCTVKNPSEDTFRNEIESGMRNGKHVVVAGCVPQGAPKSDYLNGLSVIGVQQIDRVVEVVEETLKGHSVQLLQNKKKVHGRRVAGAPLSLPKVRKNPLIEIISINSGCLNQCTYCKTKHARGDLASYPPEEVVERARQSFAEGCCEIWLTSEDTGAYGRDIGSSLPELLWQLVEVIPEHCMLRVGMTNPPYILEHLEEVANVLQHPRVYSFLHVPVQSGSDSVLGEMKREYCRQDFEHVVDFLRERVPGVTIATDIICGFPTETEDDFEETMTLCAKYRFPSLFINQFFPRPGTPAAKMDRIPANLVKKRTKRLTDLFYSYEPYADRVGEIYTVLVTEVSHDKLHYVGHNKSYEQVLLPMRDNLLGTRVHVRITSASKFSMVGEILDDERDWTRCAKNQELPNVQVQTRSRERLIQRYFGIALVLGSLAFLIQLVVRLL</sequence>
<proteinExistence type="evidence at transcript level"/>
<keyword id="KW-0004">4Fe-4S</keyword>
<keyword id="KW-0408">Iron</keyword>
<keyword id="KW-0411">Iron-sulfur</keyword>
<keyword id="KW-0472">Membrane</keyword>
<keyword id="KW-0479">Metal-binding</keyword>
<keyword id="KW-1185">Reference proteome</keyword>
<keyword id="KW-0949">S-adenosyl-L-methionine</keyword>
<keyword id="KW-0808">Transferase</keyword>
<keyword id="KW-0812">Transmembrane</keyword>
<keyword id="KW-1133">Transmembrane helix</keyword>
<keyword id="KW-0819">tRNA processing</keyword>
<evidence type="ECO:0000250" key="1">
    <source>
        <dbReference type="UniProtKB" id="Q91WE6"/>
    </source>
</evidence>
<evidence type="ECO:0000255" key="2"/>
<evidence type="ECO:0000255" key="3">
    <source>
        <dbReference type="PROSITE-ProRule" id="PRU00208"/>
    </source>
</evidence>
<evidence type="ECO:0000255" key="4">
    <source>
        <dbReference type="PROSITE-ProRule" id="PRU00780"/>
    </source>
</evidence>
<evidence type="ECO:0000255" key="5">
    <source>
        <dbReference type="PROSITE-ProRule" id="PRU01266"/>
    </source>
</evidence>
<evidence type="ECO:0000256" key="6">
    <source>
        <dbReference type="SAM" id="MobiDB-lite"/>
    </source>
</evidence>
<evidence type="ECO:0000305" key="7"/>
<dbReference type="EC" id="2.8.4.5" evidence="1"/>
<dbReference type="EMBL" id="AE013599">
    <property type="protein sequence ID" value="AAF57870.1"/>
    <property type="molecule type" value="Genomic_DNA"/>
</dbReference>
<dbReference type="EMBL" id="AY051634">
    <property type="protein sequence ID" value="AAK93058.1"/>
    <property type="molecule type" value="mRNA"/>
</dbReference>
<dbReference type="RefSeq" id="NP_611207.1">
    <property type="nucleotide sequence ID" value="NM_137363.4"/>
</dbReference>
<dbReference type="SMR" id="Q7K4W1"/>
<dbReference type="BioGRID" id="62648">
    <property type="interactions" value="8"/>
</dbReference>
<dbReference type="FunCoup" id="Q7K4W1">
    <property type="interactions" value="2122"/>
</dbReference>
<dbReference type="IntAct" id="Q7K4W1">
    <property type="interactions" value="8"/>
</dbReference>
<dbReference type="STRING" id="7227.FBpp0086116"/>
<dbReference type="GlyGen" id="Q7K4W1">
    <property type="glycosylation" value="1 site"/>
</dbReference>
<dbReference type="PaxDb" id="7227-FBpp0086116"/>
<dbReference type="DNASU" id="36954"/>
<dbReference type="EnsemblMetazoa" id="FBtr0086961">
    <property type="protein sequence ID" value="FBpp0086116"/>
    <property type="gene ID" value="FBgn0034214"/>
</dbReference>
<dbReference type="GeneID" id="36954"/>
<dbReference type="KEGG" id="dme:Dmel_CG6550"/>
<dbReference type="UCSC" id="CG6550-RA">
    <property type="organism name" value="d. melanogaster"/>
</dbReference>
<dbReference type="AGR" id="FB:FBgn0034214"/>
<dbReference type="FlyBase" id="FBgn0034214">
    <property type="gene designation" value="CG6550"/>
</dbReference>
<dbReference type="VEuPathDB" id="VectorBase:FBgn0034214"/>
<dbReference type="eggNOG" id="KOG4355">
    <property type="taxonomic scope" value="Eukaryota"/>
</dbReference>
<dbReference type="GeneTree" id="ENSGT00940000155952"/>
<dbReference type="HOGENOM" id="CLU_018697_4_1_1"/>
<dbReference type="InParanoid" id="Q7K4W1"/>
<dbReference type="OMA" id="HYAYPTG"/>
<dbReference type="OrthoDB" id="1730074at2759"/>
<dbReference type="PhylomeDB" id="Q7K4W1"/>
<dbReference type="BioGRID-ORCS" id="36954">
    <property type="hits" value="0 hits in 1 CRISPR screen"/>
</dbReference>
<dbReference type="GenomeRNAi" id="36954"/>
<dbReference type="PRO" id="PR:Q7K4W1"/>
<dbReference type="Proteomes" id="UP000000803">
    <property type="component" value="Chromosome 2R"/>
</dbReference>
<dbReference type="Bgee" id="FBgn0034214">
    <property type="expression patterns" value="Expressed in eye disc (Drosophila) and 56 other cell types or tissues"/>
</dbReference>
<dbReference type="GO" id="GO:0012505">
    <property type="term" value="C:endomembrane system"/>
    <property type="evidence" value="ECO:0007005"/>
    <property type="project" value="FlyBase"/>
</dbReference>
<dbReference type="GO" id="GO:0005783">
    <property type="term" value="C:endoplasmic reticulum"/>
    <property type="evidence" value="ECO:0000318"/>
    <property type="project" value="GO_Central"/>
</dbReference>
<dbReference type="GO" id="GO:0016020">
    <property type="term" value="C:membrane"/>
    <property type="evidence" value="ECO:0007669"/>
    <property type="project" value="UniProtKB-SubCell"/>
</dbReference>
<dbReference type="GO" id="GO:0051539">
    <property type="term" value="F:4 iron, 4 sulfur cluster binding"/>
    <property type="evidence" value="ECO:0007669"/>
    <property type="project" value="UniProtKB-KW"/>
</dbReference>
<dbReference type="GO" id="GO:0046872">
    <property type="term" value="F:metal ion binding"/>
    <property type="evidence" value="ECO:0007669"/>
    <property type="project" value="UniProtKB-KW"/>
</dbReference>
<dbReference type="GO" id="GO:0035598">
    <property type="term" value="F:N6-threonylcarbomyladenosine methylthiotransferase activity"/>
    <property type="evidence" value="ECO:0000318"/>
    <property type="project" value="GO_Central"/>
</dbReference>
<dbReference type="GO" id="GO:0061712">
    <property type="term" value="F:tRNA (N(6)-L-threonylcarbamoyladenosine(37)-C(2))-methylthiotransferase"/>
    <property type="evidence" value="ECO:0007669"/>
    <property type="project" value="UniProtKB-EC"/>
</dbReference>
<dbReference type="GO" id="GO:0035600">
    <property type="term" value="P:tRNA methylthiolation"/>
    <property type="evidence" value="ECO:0000318"/>
    <property type="project" value="GO_Central"/>
</dbReference>
<dbReference type="CDD" id="cd01335">
    <property type="entry name" value="Radical_SAM"/>
    <property type="match status" value="1"/>
</dbReference>
<dbReference type="FunFam" id="3.40.50.12160:FF:000005">
    <property type="entry name" value="threonylcarbamoyladenosine tRNA methylthiotransferase isoform X1"/>
    <property type="match status" value="1"/>
</dbReference>
<dbReference type="FunFam" id="3.80.30.20:FF:000002">
    <property type="entry name" value="threonylcarbamoyladenosine tRNA methylthiotransferase isoform X2"/>
    <property type="match status" value="1"/>
</dbReference>
<dbReference type="Gene3D" id="3.40.50.12160">
    <property type="entry name" value="Methylthiotransferase, N-terminal domain"/>
    <property type="match status" value="1"/>
</dbReference>
<dbReference type="Gene3D" id="3.80.30.20">
    <property type="entry name" value="tm_1862 like domain"/>
    <property type="match status" value="1"/>
</dbReference>
<dbReference type="InterPro" id="IPR006638">
    <property type="entry name" value="Elp3/MiaA/NifB-like_rSAM"/>
</dbReference>
<dbReference type="InterPro" id="IPR005839">
    <property type="entry name" value="Methylthiotransferase"/>
</dbReference>
<dbReference type="InterPro" id="IPR020612">
    <property type="entry name" value="Methylthiotransferase_CS"/>
</dbReference>
<dbReference type="InterPro" id="IPR013848">
    <property type="entry name" value="Methylthiotransferase_N"/>
</dbReference>
<dbReference type="InterPro" id="IPR038135">
    <property type="entry name" value="Methylthiotransferase_N_sf"/>
</dbReference>
<dbReference type="InterPro" id="IPR006466">
    <property type="entry name" value="MiaB-like_arc_euk"/>
</dbReference>
<dbReference type="InterPro" id="IPR007197">
    <property type="entry name" value="rSAM"/>
</dbReference>
<dbReference type="InterPro" id="IPR023404">
    <property type="entry name" value="rSAM_horseshoe"/>
</dbReference>
<dbReference type="InterPro" id="IPR002792">
    <property type="entry name" value="TRAM_dom"/>
</dbReference>
<dbReference type="NCBIfam" id="TIGR01578">
    <property type="entry name" value="MiaB-like-B"/>
    <property type="match status" value="1"/>
</dbReference>
<dbReference type="NCBIfam" id="TIGR00089">
    <property type="entry name" value="MiaB/RimO family radical SAM methylthiotransferase"/>
    <property type="match status" value="1"/>
</dbReference>
<dbReference type="PANTHER" id="PTHR11918">
    <property type="entry name" value="RADICAL SAM PROTEINS"/>
    <property type="match status" value="1"/>
</dbReference>
<dbReference type="PANTHER" id="PTHR11918:SF45">
    <property type="entry name" value="THREONYLCARBAMOYLADENOSINE TRNA METHYLTHIOTRANSFERASE"/>
    <property type="match status" value="1"/>
</dbReference>
<dbReference type="Pfam" id="PF04055">
    <property type="entry name" value="Radical_SAM"/>
    <property type="match status" value="1"/>
</dbReference>
<dbReference type="Pfam" id="PF01938">
    <property type="entry name" value="TRAM"/>
    <property type="match status" value="1"/>
</dbReference>
<dbReference type="Pfam" id="PF00919">
    <property type="entry name" value="UPF0004"/>
    <property type="match status" value="1"/>
</dbReference>
<dbReference type="SFLD" id="SFLDG01082">
    <property type="entry name" value="B12-binding_domain_containing"/>
    <property type="match status" value="1"/>
</dbReference>
<dbReference type="SFLD" id="SFLDS00029">
    <property type="entry name" value="Radical_SAM"/>
    <property type="match status" value="1"/>
</dbReference>
<dbReference type="SMART" id="SM00729">
    <property type="entry name" value="Elp3"/>
    <property type="match status" value="1"/>
</dbReference>
<dbReference type="SUPFAM" id="SSF102114">
    <property type="entry name" value="Radical SAM enzymes"/>
    <property type="match status" value="1"/>
</dbReference>
<dbReference type="PROSITE" id="PS51449">
    <property type="entry name" value="MTTASE_N"/>
    <property type="match status" value="1"/>
</dbReference>
<dbReference type="PROSITE" id="PS01278">
    <property type="entry name" value="MTTASE_RADICAL"/>
    <property type="match status" value="1"/>
</dbReference>
<dbReference type="PROSITE" id="PS51918">
    <property type="entry name" value="RADICAL_SAM"/>
    <property type="match status" value="1"/>
</dbReference>
<dbReference type="PROSITE" id="PS50926">
    <property type="entry name" value="TRAM"/>
    <property type="match status" value="1"/>
</dbReference>
<reference key="1">
    <citation type="journal article" date="2000" name="Science">
        <title>The genome sequence of Drosophila melanogaster.</title>
        <authorList>
            <person name="Adams M.D."/>
            <person name="Celniker S.E."/>
            <person name="Holt R.A."/>
            <person name="Evans C.A."/>
            <person name="Gocayne J.D."/>
            <person name="Amanatides P.G."/>
            <person name="Scherer S.E."/>
            <person name="Li P.W."/>
            <person name="Hoskins R.A."/>
            <person name="Galle R.F."/>
            <person name="George R.A."/>
            <person name="Lewis S.E."/>
            <person name="Richards S."/>
            <person name="Ashburner M."/>
            <person name="Henderson S.N."/>
            <person name="Sutton G.G."/>
            <person name="Wortman J.R."/>
            <person name="Yandell M.D."/>
            <person name="Zhang Q."/>
            <person name="Chen L.X."/>
            <person name="Brandon R.C."/>
            <person name="Rogers Y.-H.C."/>
            <person name="Blazej R.G."/>
            <person name="Champe M."/>
            <person name="Pfeiffer B.D."/>
            <person name="Wan K.H."/>
            <person name="Doyle C."/>
            <person name="Baxter E.G."/>
            <person name="Helt G."/>
            <person name="Nelson C.R."/>
            <person name="Miklos G.L.G."/>
            <person name="Abril J.F."/>
            <person name="Agbayani A."/>
            <person name="An H.-J."/>
            <person name="Andrews-Pfannkoch C."/>
            <person name="Baldwin D."/>
            <person name="Ballew R.M."/>
            <person name="Basu A."/>
            <person name="Baxendale J."/>
            <person name="Bayraktaroglu L."/>
            <person name="Beasley E.M."/>
            <person name="Beeson K.Y."/>
            <person name="Benos P.V."/>
            <person name="Berman B.P."/>
            <person name="Bhandari D."/>
            <person name="Bolshakov S."/>
            <person name="Borkova D."/>
            <person name="Botchan M.R."/>
            <person name="Bouck J."/>
            <person name="Brokstein P."/>
            <person name="Brottier P."/>
            <person name="Burtis K.C."/>
            <person name="Busam D.A."/>
            <person name="Butler H."/>
            <person name="Cadieu E."/>
            <person name="Center A."/>
            <person name="Chandra I."/>
            <person name="Cherry J.M."/>
            <person name="Cawley S."/>
            <person name="Dahlke C."/>
            <person name="Davenport L.B."/>
            <person name="Davies P."/>
            <person name="de Pablos B."/>
            <person name="Delcher A."/>
            <person name="Deng Z."/>
            <person name="Mays A.D."/>
            <person name="Dew I."/>
            <person name="Dietz S.M."/>
            <person name="Dodson K."/>
            <person name="Doup L.E."/>
            <person name="Downes M."/>
            <person name="Dugan-Rocha S."/>
            <person name="Dunkov B.C."/>
            <person name="Dunn P."/>
            <person name="Durbin K.J."/>
            <person name="Evangelista C.C."/>
            <person name="Ferraz C."/>
            <person name="Ferriera S."/>
            <person name="Fleischmann W."/>
            <person name="Fosler C."/>
            <person name="Gabrielian A.E."/>
            <person name="Garg N.S."/>
            <person name="Gelbart W.M."/>
            <person name="Glasser K."/>
            <person name="Glodek A."/>
            <person name="Gong F."/>
            <person name="Gorrell J.H."/>
            <person name="Gu Z."/>
            <person name="Guan P."/>
            <person name="Harris M."/>
            <person name="Harris N.L."/>
            <person name="Harvey D.A."/>
            <person name="Heiman T.J."/>
            <person name="Hernandez J.R."/>
            <person name="Houck J."/>
            <person name="Hostin D."/>
            <person name="Houston K.A."/>
            <person name="Howland T.J."/>
            <person name="Wei M.-H."/>
            <person name="Ibegwam C."/>
            <person name="Jalali M."/>
            <person name="Kalush F."/>
            <person name="Karpen G.H."/>
            <person name="Ke Z."/>
            <person name="Kennison J.A."/>
            <person name="Ketchum K.A."/>
            <person name="Kimmel B.E."/>
            <person name="Kodira C.D."/>
            <person name="Kraft C.L."/>
            <person name="Kravitz S."/>
            <person name="Kulp D."/>
            <person name="Lai Z."/>
            <person name="Lasko P."/>
            <person name="Lei Y."/>
            <person name="Levitsky A.A."/>
            <person name="Li J.H."/>
            <person name="Li Z."/>
            <person name="Liang Y."/>
            <person name="Lin X."/>
            <person name="Liu X."/>
            <person name="Mattei B."/>
            <person name="McIntosh T.C."/>
            <person name="McLeod M.P."/>
            <person name="McPherson D."/>
            <person name="Merkulov G."/>
            <person name="Milshina N.V."/>
            <person name="Mobarry C."/>
            <person name="Morris J."/>
            <person name="Moshrefi A."/>
            <person name="Mount S.M."/>
            <person name="Moy M."/>
            <person name="Murphy B."/>
            <person name="Murphy L."/>
            <person name="Muzny D.M."/>
            <person name="Nelson D.L."/>
            <person name="Nelson D.R."/>
            <person name="Nelson K.A."/>
            <person name="Nixon K."/>
            <person name="Nusskern D.R."/>
            <person name="Pacleb J.M."/>
            <person name="Palazzolo M."/>
            <person name="Pittman G.S."/>
            <person name="Pan S."/>
            <person name="Pollard J."/>
            <person name="Puri V."/>
            <person name="Reese M.G."/>
            <person name="Reinert K."/>
            <person name="Remington K."/>
            <person name="Saunders R.D.C."/>
            <person name="Scheeler F."/>
            <person name="Shen H."/>
            <person name="Shue B.C."/>
            <person name="Siden-Kiamos I."/>
            <person name="Simpson M."/>
            <person name="Skupski M.P."/>
            <person name="Smith T.J."/>
            <person name="Spier E."/>
            <person name="Spradling A.C."/>
            <person name="Stapleton M."/>
            <person name="Strong R."/>
            <person name="Sun E."/>
            <person name="Svirskas R."/>
            <person name="Tector C."/>
            <person name="Turner R."/>
            <person name="Venter E."/>
            <person name="Wang A.H."/>
            <person name="Wang X."/>
            <person name="Wang Z.-Y."/>
            <person name="Wassarman D.A."/>
            <person name="Weinstock G.M."/>
            <person name="Weissenbach J."/>
            <person name="Williams S.M."/>
            <person name="Woodage T."/>
            <person name="Worley K.C."/>
            <person name="Wu D."/>
            <person name="Yang S."/>
            <person name="Yao Q.A."/>
            <person name="Ye J."/>
            <person name="Yeh R.-F."/>
            <person name="Zaveri J.S."/>
            <person name="Zhan M."/>
            <person name="Zhang G."/>
            <person name="Zhao Q."/>
            <person name="Zheng L."/>
            <person name="Zheng X.H."/>
            <person name="Zhong F.N."/>
            <person name="Zhong W."/>
            <person name="Zhou X."/>
            <person name="Zhu S.C."/>
            <person name="Zhu X."/>
            <person name="Smith H.O."/>
            <person name="Gibbs R.A."/>
            <person name="Myers E.W."/>
            <person name="Rubin G.M."/>
            <person name="Venter J.C."/>
        </authorList>
    </citation>
    <scope>NUCLEOTIDE SEQUENCE [LARGE SCALE GENOMIC DNA]</scope>
    <source>
        <strain>Berkeley</strain>
    </source>
</reference>
<reference key="2">
    <citation type="journal article" date="2002" name="Genome Biol.">
        <title>Annotation of the Drosophila melanogaster euchromatic genome: a systematic review.</title>
        <authorList>
            <person name="Misra S."/>
            <person name="Crosby M.A."/>
            <person name="Mungall C.J."/>
            <person name="Matthews B.B."/>
            <person name="Campbell K.S."/>
            <person name="Hradecky P."/>
            <person name="Huang Y."/>
            <person name="Kaminker J.S."/>
            <person name="Millburn G.H."/>
            <person name="Prochnik S.E."/>
            <person name="Smith C.D."/>
            <person name="Tupy J.L."/>
            <person name="Whitfield E.J."/>
            <person name="Bayraktaroglu L."/>
            <person name="Berman B.P."/>
            <person name="Bettencourt B.R."/>
            <person name="Celniker S.E."/>
            <person name="de Grey A.D.N.J."/>
            <person name="Drysdale R.A."/>
            <person name="Harris N.L."/>
            <person name="Richter J."/>
            <person name="Russo S."/>
            <person name="Schroeder A.J."/>
            <person name="Shu S.Q."/>
            <person name="Stapleton M."/>
            <person name="Yamada C."/>
            <person name="Ashburner M."/>
            <person name="Gelbart W.M."/>
            <person name="Rubin G.M."/>
            <person name="Lewis S.E."/>
        </authorList>
    </citation>
    <scope>GENOME REANNOTATION</scope>
    <source>
        <strain>Berkeley</strain>
    </source>
</reference>
<reference key="3">
    <citation type="journal article" date="2002" name="Genome Biol.">
        <title>A Drosophila full-length cDNA resource.</title>
        <authorList>
            <person name="Stapleton M."/>
            <person name="Carlson J.W."/>
            <person name="Brokstein P."/>
            <person name="Yu C."/>
            <person name="Champe M."/>
            <person name="George R.A."/>
            <person name="Guarin H."/>
            <person name="Kronmiller B."/>
            <person name="Pacleb J.M."/>
            <person name="Park S."/>
            <person name="Wan K.H."/>
            <person name="Rubin G.M."/>
            <person name="Celniker S.E."/>
        </authorList>
    </citation>
    <scope>NUCLEOTIDE SEQUENCE [LARGE SCALE MRNA]</scope>
    <source>
        <strain>Berkeley</strain>
        <tissue>Head</tissue>
    </source>
</reference>
<accession>Q7K4W1</accession>
<organism>
    <name type="scientific">Drosophila melanogaster</name>
    <name type="common">Fruit fly</name>
    <dbReference type="NCBI Taxonomy" id="7227"/>
    <lineage>
        <taxon>Eukaryota</taxon>
        <taxon>Metazoa</taxon>
        <taxon>Ecdysozoa</taxon>
        <taxon>Arthropoda</taxon>
        <taxon>Hexapoda</taxon>
        <taxon>Insecta</taxon>
        <taxon>Pterygota</taxon>
        <taxon>Neoptera</taxon>
        <taxon>Endopterygota</taxon>
        <taxon>Diptera</taxon>
        <taxon>Brachycera</taxon>
        <taxon>Muscomorpha</taxon>
        <taxon>Ephydroidea</taxon>
        <taxon>Drosophilidae</taxon>
        <taxon>Drosophila</taxon>
        <taxon>Sophophora</taxon>
    </lineage>
</organism>
<name>CDKAL_DROME</name>